<keyword id="KW-1185">Reference proteome</keyword>
<sequence length="152" mass="17517">MTDKPFWQTKNLNQLTRSEWESLCDGCGQCCLHKLQDEDTDEIYWTSVACTLLNPETCQCRDYPNRKKTVPDCIFLTPEIVDEVDWLPVTCAYRLVAEGSDLYWWHPLVSGSPETVHEAGISVRGKVTAFDHDMQDDDDYLDHMVTPDKIAR</sequence>
<dbReference type="EMBL" id="AM040264">
    <property type="protein sequence ID" value="CAJ11452.1"/>
    <property type="molecule type" value="Genomic_DNA"/>
</dbReference>
<dbReference type="RefSeq" id="WP_002964583.1">
    <property type="nucleotide sequence ID" value="NZ_KN046823.1"/>
</dbReference>
<dbReference type="STRING" id="359391.BAB1_1496"/>
<dbReference type="KEGG" id="bmf:BAB1_1496"/>
<dbReference type="PATRIC" id="fig|359391.11.peg.945"/>
<dbReference type="HOGENOM" id="CLU_109769_0_1_5"/>
<dbReference type="PhylomeDB" id="Q2YM28"/>
<dbReference type="Proteomes" id="UP000002719">
    <property type="component" value="Chromosome I"/>
</dbReference>
<dbReference type="HAMAP" id="MF_00676">
    <property type="entry name" value="UPF0260"/>
    <property type="match status" value="1"/>
</dbReference>
<dbReference type="InterPro" id="IPR005358">
    <property type="entry name" value="Puta_zinc/iron-chelating_dom"/>
</dbReference>
<dbReference type="InterPro" id="IPR008228">
    <property type="entry name" value="UCP006173"/>
</dbReference>
<dbReference type="NCBIfam" id="NF003501">
    <property type="entry name" value="PRK05170.1-5"/>
    <property type="match status" value="1"/>
</dbReference>
<dbReference type="NCBIfam" id="NF003507">
    <property type="entry name" value="PRK05170.2-5"/>
    <property type="match status" value="1"/>
</dbReference>
<dbReference type="PANTHER" id="PTHR37421">
    <property type="entry name" value="UPF0260 PROTEIN YCGN"/>
    <property type="match status" value="1"/>
</dbReference>
<dbReference type="PANTHER" id="PTHR37421:SF1">
    <property type="entry name" value="UPF0260 PROTEIN YCGN"/>
    <property type="match status" value="1"/>
</dbReference>
<dbReference type="Pfam" id="PF03692">
    <property type="entry name" value="CxxCxxCC"/>
    <property type="match status" value="1"/>
</dbReference>
<dbReference type="PIRSF" id="PIRSF006173">
    <property type="entry name" value="UCP006173"/>
    <property type="match status" value="1"/>
</dbReference>
<organism>
    <name type="scientific">Brucella abortus (strain 2308)</name>
    <dbReference type="NCBI Taxonomy" id="359391"/>
    <lineage>
        <taxon>Bacteria</taxon>
        <taxon>Pseudomonadati</taxon>
        <taxon>Pseudomonadota</taxon>
        <taxon>Alphaproteobacteria</taxon>
        <taxon>Hyphomicrobiales</taxon>
        <taxon>Brucellaceae</taxon>
        <taxon>Brucella/Ochrobactrum group</taxon>
        <taxon>Brucella</taxon>
    </lineage>
</organism>
<gene>
    <name type="ordered locus">BAB1_1496</name>
</gene>
<comment type="similarity">
    <text evidence="1">Belongs to the UPF0260 family.</text>
</comment>
<reference key="1">
    <citation type="journal article" date="2005" name="Infect. Immun.">
        <title>Whole-genome analyses of speciation events in pathogenic Brucellae.</title>
        <authorList>
            <person name="Chain P.S."/>
            <person name="Comerci D.J."/>
            <person name="Tolmasky M.E."/>
            <person name="Larimer F.W."/>
            <person name="Malfatti S.A."/>
            <person name="Vergez L.M."/>
            <person name="Aguero F."/>
            <person name="Land M.L."/>
            <person name="Ugalde R.A."/>
            <person name="Garcia E."/>
        </authorList>
    </citation>
    <scope>NUCLEOTIDE SEQUENCE [LARGE SCALE GENOMIC DNA]</scope>
    <source>
        <strain>2308</strain>
    </source>
</reference>
<accession>Q2YM28</accession>
<feature type="chain" id="PRO_1000044788" description="UPF0260 protein BAB1_1496">
    <location>
        <begin position="1"/>
        <end position="152"/>
    </location>
</feature>
<protein>
    <recommendedName>
        <fullName evidence="1">UPF0260 protein BAB1_1496</fullName>
    </recommendedName>
</protein>
<proteinExistence type="inferred from homology"/>
<name>Y1496_BRUA2</name>
<evidence type="ECO:0000255" key="1">
    <source>
        <dbReference type="HAMAP-Rule" id="MF_00676"/>
    </source>
</evidence>